<keyword id="KW-0004">4Fe-4S</keyword>
<keyword id="KW-0963">Cytoplasm</keyword>
<keyword id="KW-0408">Iron</keyword>
<keyword id="KW-0411">Iron-sulfur</keyword>
<keyword id="KW-0479">Metal-binding</keyword>
<keyword id="KW-1185">Reference proteome</keyword>
<keyword id="KW-0949">S-adenosyl-L-methionine</keyword>
<keyword id="KW-0808">Transferase</keyword>
<feature type="chain" id="PRO_0000374857" description="Ribosomal protein uS12 methylthiotransferase RimO">
    <location>
        <begin position="1"/>
        <end position="439"/>
    </location>
</feature>
<feature type="domain" description="MTTase N-terminal" evidence="1">
    <location>
        <begin position="7"/>
        <end position="119"/>
    </location>
</feature>
<feature type="domain" description="Radical SAM core" evidence="2">
    <location>
        <begin position="137"/>
        <end position="368"/>
    </location>
</feature>
<feature type="binding site" evidence="1">
    <location>
        <position position="16"/>
    </location>
    <ligand>
        <name>[4Fe-4S] cluster</name>
        <dbReference type="ChEBI" id="CHEBI:49883"/>
        <label>1</label>
    </ligand>
</feature>
<feature type="binding site" evidence="1">
    <location>
        <position position="50"/>
    </location>
    <ligand>
        <name>[4Fe-4S] cluster</name>
        <dbReference type="ChEBI" id="CHEBI:49883"/>
        <label>1</label>
    </ligand>
</feature>
<feature type="binding site" evidence="1">
    <location>
        <position position="82"/>
    </location>
    <ligand>
        <name>[4Fe-4S] cluster</name>
        <dbReference type="ChEBI" id="CHEBI:49883"/>
        <label>1</label>
    </ligand>
</feature>
<feature type="binding site" evidence="1">
    <location>
        <position position="151"/>
    </location>
    <ligand>
        <name>[4Fe-4S] cluster</name>
        <dbReference type="ChEBI" id="CHEBI:49883"/>
        <label>2</label>
        <note>4Fe-4S-S-AdoMet</note>
    </ligand>
</feature>
<feature type="binding site" evidence="1">
    <location>
        <position position="155"/>
    </location>
    <ligand>
        <name>[4Fe-4S] cluster</name>
        <dbReference type="ChEBI" id="CHEBI:49883"/>
        <label>2</label>
        <note>4Fe-4S-S-AdoMet</note>
    </ligand>
</feature>
<feature type="binding site" evidence="1">
    <location>
        <position position="158"/>
    </location>
    <ligand>
        <name>[4Fe-4S] cluster</name>
        <dbReference type="ChEBI" id="CHEBI:49883"/>
        <label>2</label>
        <note>4Fe-4S-S-AdoMet</note>
    </ligand>
</feature>
<sequence>MQVKENKQLCLISLGCSKNLVDSEVMLGKLYNYTLTNDVKSADVILINTCGFIESAKQESIQTILNAAKDKKEGAILIASGCLSERYKDEIKELIPEVDIFTGVGDYDKIDIMIAKKQNQFSEQVFLSEHYNARIITGSSVHAYVKISEGCNQKCSFCAIPSFKGKLQSRELDSILKEVEDLALKGYKDMTFIAQDSSSFLYDKGQKDGLIQLIRAIDKQQALKSARILYLYPSSTTLELIGAIESSPIFQNYFDMPIQHISDSMLKKMRRNSSQAHHLKLLNAMKQVKESFIRSTIIVGHPEENEGEFEELSAFLDEFRFDRLNIFAFSAEENTHAYSLEKVPKKTINARIKALNKIALKHQNHSFKALLNKPIKALVENKEGEYFYKARDLRWVPEVDGEILINDSELTTPLKPGHYTIMPSAFKDNILLAKVLSPF</sequence>
<dbReference type="EC" id="2.8.4.4" evidence="1"/>
<dbReference type="EMBL" id="CP001173">
    <property type="protein sequence ID" value="ACI27445.1"/>
    <property type="molecule type" value="Genomic_DNA"/>
</dbReference>
<dbReference type="RefSeq" id="WP_001197354.1">
    <property type="nucleotide sequence ID" value="NC_011333.1"/>
</dbReference>
<dbReference type="SMR" id="B5Z796"/>
<dbReference type="KEGG" id="hpg:HPG27_690"/>
<dbReference type="HOGENOM" id="CLU_018697_0_1_7"/>
<dbReference type="Proteomes" id="UP000001735">
    <property type="component" value="Chromosome"/>
</dbReference>
<dbReference type="GO" id="GO:0005829">
    <property type="term" value="C:cytosol"/>
    <property type="evidence" value="ECO:0007669"/>
    <property type="project" value="TreeGrafter"/>
</dbReference>
<dbReference type="GO" id="GO:0051539">
    <property type="term" value="F:4 iron, 4 sulfur cluster binding"/>
    <property type="evidence" value="ECO:0007669"/>
    <property type="project" value="UniProtKB-UniRule"/>
</dbReference>
<dbReference type="GO" id="GO:0035599">
    <property type="term" value="F:aspartic acid methylthiotransferase activity"/>
    <property type="evidence" value="ECO:0007669"/>
    <property type="project" value="TreeGrafter"/>
</dbReference>
<dbReference type="GO" id="GO:0046872">
    <property type="term" value="F:metal ion binding"/>
    <property type="evidence" value="ECO:0007669"/>
    <property type="project" value="UniProtKB-KW"/>
</dbReference>
<dbReference type="GO" id="GO:0103039">
    <property type="term" value="F:protein methylthiotransferase activity"/>
    <property type="evidence" value="ECO:0007669"/>
    <property type="project" value="UniProtKB-EC"/>
</dbReference>
<dbReference type="GO" id="GO:0006400">
    <property type="term" value="P:tRNA modification"/>
    <property type="evidence" value="ECO:0007669"/>
    <property type="project" value="InterPro"/>
</dbReference>
<dbReference type="CDD" id="cd01335">
    <property type="entry name" value="Radical_SAM"/>
    <property type="match status" value="1"/>
</dbReference>
<dbReference type="FunFam" id="3.40.50.12160:FF:000010">
    <property type="entry name" value="Ribosomal protein S12 methylthiotransferase RimO"/>
    <property type="match status" value="1"/>
</dbReference>
<dbReference type="FunFam" id="3.80.30.20:FF:000015">
    <property type="entry name" value="Ribosomal protein S12 methylthiotransferase RimO"/>
    <property type="match status" value="1"/>
</dbReference>
<dbReference type="Gene3D" id="3.40.50.12160">
    <property type="entry name" value="Methylthiotransferase, N-terminal domain"/>
    <property type="match status" value="1"/>
</dbReference>
<dbReference type="Gene3D" id="3.80.30.20">
    <property type="entry name" value="tm_1862 like domain"/>
    <property type="match status" value="1"/>
</dbReference>
<dbReference type="HAMAP" id="MF_01865">
    <property type="entry name" value="MTTase_RimO"/>
    <property type="match status" value="1"/>
</dbReference>
<dbReference type="InterPro" id="IPR006638">
    <property type="entry name" value="Elp3/MiaA/NifB-like_rSAM"/>
</dbReference>
<dbReference type="InterPro" id="IPR005839">
    <property type="entry name" value="Methylthiotransferase"/>
</dbReference>
<dbReference type="InterPro" id="IPR020612">
    <property type="entry name" value="Methylthiotransferase_CS"/>
</dbReference>
<dbReference type="InterPro" id="IPR013848">
    <property type="entry name" value="Methylthiotransferase_N"/>
</dbReference>
<dbReference type="InterPro" id="IPR038135">
    <property type="entry name" value="Methylthiotransferase_N_sf"/>
</dbReference>
<dbReference type="InterPro" id="IPR005840">
    <property type="entry name" value="Ribosomal_uS12_MeSTrfase_RimO"/>
</dbReference>
<dbReference type="InterPro" id="IPR007197">
    <property type="entry name" value="rSAM"/>
</dbReference>
<dbReference type="InterPro" id="IPR023404">
    <property type="entry name" value="rSAM_horseshoe"/>
</dbReference>
<dbReference type="NCBIfam" id="TIGR01125">
    <property type="entry name" value="30S ribosomal protein S12 methylthiotransferase RimO"/>
    <property type="match status" value="1"/>
</dbReference>
<dbReference type="NCBIfam" id="TIGR00089">
    <property type="entry name" value="MiaB/RimO family radical SAM methylthiotransferase"/>
    <property type="match status" value="1"/>
</dbReference>
<dbReference type="PANTHER" id="PTHR43837">
    <property type="entry name" value="RIBOSOMAL PROTEIN S12 METHYLTHIOTRANSFERASE RIMO"/>
    <property type="match status" value="1"/>
</dbReference>
<dbReference type="PANTHER" id="PTHR43837:SF1">
    <property type="entry name" value="RIBOSOMAL PROTEIN US12 METHYLTHIOTRANSFERASE RIMO"/>
    <property type="match status" value="1"/>
</dbReference>
<dbReference type="Pfam" id="PF04055">
    <property type="entry name" value="Radical_SAM"/>
    <property type="match status" value="1"/>
</dbReference>
<dbReference type="Pfam" id="PF00919">
    <property type="entry name" value="UPF0004"/>
    <property type="match status" value="1"/>
</dbReference>
<dbReference type="SFLD" id="SFLDG01082">
    <property type="entry name" value="B12-binding_domain_containing"/>
    <property type="match status" value="1"/>
</dbReference>
<dbReference type="SFLD" id="SFLDG01061">
    <property type="entry name" value="methylthiotransferase"/>
    <property type="match status" value="1"/>
</dbReference>
<dbReference type="SFLD" id="SFLDF00274">
    <property type="entry name" value="ribosomal_protein_S12_methylth"/>
    <property type="match status" value="1"/>
</dbReference>
<dbReference type="SMART" id="SM00729">
    <property type="entry name" value="Elp3"/>
    <property type="match status" value="1"/>
</dbReference>
<dbReference type="SUPFAM" id="SSF102114">
    <property type="entry name" value="Radical SAM enzymes"/>
    <property type="match status" value="1"/>
</dbReference>
<dbReference type="PROSITE" id="PS51449">
    <property type="entry name" value="MTTASE_N"/>
    <property type="match status" value="1"/>
</dbReference>
<dbReference type="PROSITE" id="PS01278">
    <property type="entry name" value="MTTASE_RADICAL"/>
    <property type="match status" value="1"/>
</dbReference>
<dbReference type="PROSITE" id="PS51918">
    <property type="entry name" value="RADICAL_SAM"/>
    <property type="match status" value="1"/>
</dbReference>
<proteinExistence type="inferred from homology"/>
<comment type="function">
    <text evidence="1">Catalyzes the methylthiolation of an aspartic acid residue of ribosomal protein uS12.</text>
</comment>
<comment type="catalytic activity">
    <reaction evidence="1">
        <text>L-aspartate(89)-[ribosomal protein uS12]-hydrogen + (sulfur carrier)-SH + AH2 + 2 S-adenosyl-L-methionine = 3-methylsulfanyl-L-aspartate(89)-[ribosomal protein uS12]-hydrogen + (sulfur carrier)-H + 5'-deoxyadenosine + L-methionine + A + S-adenosyl-L-homocysteine + 2 H(+)</text>
        <dbReference type="Rhea" id="RHEA:37087"/>
        <dbReference type="Rhea" id="RHEA-COMP:10460"/>
        <dbReference type="Rhea" id="RHEA-COMP:10461"/>
        <dbReference type="Rhea" id="RHEA-COMP:14737"/>
        <dbReference type="Rhea" id="RHEA-COMP:14739"/>
        <dbReference type="ChEBI" id="CHEBI:13193"/>
        <dbReference type="ChEBI" id="CHEBI:15378"/>
        <dbReference type="ChEBI" id="CHEBI:17319"/>
        <dbReference type="ChEBI" id="CHEBI:17499"/>
        <dbReference type="ChEBI" id="CHEBI:29917"/>
        <dbReference type="ChEBI" id="CHEBI:29961"/>
        <dbReference type="ChEBI" id="CHEBI:57844"/>
        <dbReference type="ChEBI" id="CHEBI:57856"/>
        <dbReference type="ChEBI" id="CHEBI:59789"/>
        <dbReference type="ChEBI" id="CHEBI:64428"/>
        <dbReference type="ChEBI" id="CHEBI:73599"/>
        <dbReference type="EC" id="2.8.4.4"/>
    </reaction>
</comment>
<comment type="cofactor">
    <cofactor evidence="1">
        <name>[4Fe-4S] cluster</name>
        <dbReference type="ChEBI" id="CHEBI:49883"/>
    </cofactor>
    <text evidence="1">Binds 2 [4Fe-4S] clusters. One cluster is coordinated with 3 cysteines and an exchangeable S-adenosyl-L-methionine.</text>
</comment>
<comment type="subcellular location">
    <subcellularLocation>
        <location evidence="1">Cytoplasm</location>
    </subcellularLocation>
</comment>
<comment type="similarity">
    <text evidence="1">Belongs to the methylthiotransferase family. RimO subfamily.</text>
</comment>
<organism>
    <name type="scientific">Helicobacter pylori (strain G27)</name>
    <dbReference type="NCBI Taxonomy" id="563041"/>
    <lineage>
        <taxon>Bacteria</taxon>
        <taxon>Pseudomonadati</taxon>
        <taxon>Campylobacterota</taxon>
        <taxon>Epsilonproteobacteria</taxon>
        <taxon>Campylobacterales</taxon>
        <taxon>Helicobacteraceae</taxon>
        <taxon>Helicobacter</taxon>
    </lineage>
</organism>
<name>RIMO_HELPG</name>
<evidence type="ECO:0000255" key="1">
    <source>
        <dbReference type="HAMAP-Rule" id="MF_01865"/>
    </source>
</evidence>
<evidence type="ECO:0000255" key="2">
    <source>
        <dbReference type="PROSITE-ProRule" id="PRU01266"/>
    </source>
</evidence>
<gene>
    <name evidence="1" type="primary">rimO</name>
    <name type="ordered locus">HPG27_690</name>
</gene>
<protein>
    <recommendedName>
        <fullName evidence="1">Ribosomal protein uS12 methylthiotransferase RimO</fullName>
        <shortName evidence="1">uS12 MTTase</shortName>
        <shortName evidence="1">uS12 methylthiotransferase</shortName>
        <ecNumber evidence="1">2.8.4.4</ecNumber>
    </recommendedName>
    <alternativeName>
        <fullName evidence="1">Ribosomal protein uS12 (aspartate-C(3))-methylthiotransferase</fullName>
    </alternativeName>
    <alternativeName>
        <fullName evidence="1">Ribosome maturation factor RimO</fullName>
    </alternativeName>
</protein>
<reference key="1">
    <citation type="journal article" date="2009" name="J. Bacteriol.">
        <title>The complete genome sequence of Helicobacter pylori strain G27.</title>
        <authorList>
            <person name="Baltrus D.A."/>
            <person name="Amieva M.R."/>
            <person name="Covacci A."/>
            <person name="Lowe T.M."/>
            <person name="Merrell D.S."/>
            <person name="Ottemann K.M."/>
            <person name="Stein M."/>
            <person name="Salama N.R."/>
            <person name="Guillemin K."/>
        </authorList>
    </citation>
    <scope>NUCLEOTIDE SEQUENCE [LARGE SCALE GENOMIC DNA]</scope>
    <source>
        <strain>G27</strain>
    </source>
</reference>
<accession>B5Z796</accession>